<comment type="function">
    <text evidence="1">Prevents cell to cell fusion by interacting with and directing the viral OPG040 protein on the host plasma membrane. The OPG185-OPG040 complex associates with components of the entry fusion complex (EFC) presumably to avoid superinfection and syncytium formation. Via its interaction with C3/VCP protein, protects the infected cell and probably also the extracellular enveloped virus from complement attack.</text>
</comment>
<comment type="subunit">
    <text evidence="1">Heterodimerizes with OPG040. The heterodimer OPG185-OPG040 interacts with components of the entry fusion complex OPG143 and OPG094. Heterodimer with C3/VPC protein; disulfide-linked.</text>
</comment>
<comment type="subcellular location">
    <subcellularLocation>
        <location evidence="1">Virion membrane</location>
        <topology evidence="1">Single-pass type I membrane protein</topology>
    </subcellularLocation>
    <subcellularLocation>
        <location evidence="1">Host membrane</location>
        <topology evidence="1">Single-pass type I membrane protein</topology>
    </subcellularLocation>
    <text evidence="1">Component of extracellular enveloped virus (EEV) but not intracellular mature virus (IMV). Component of the outermost membrane of EEV.</text>
</comment>
<comment type="induction">
    <text>Expressed in the early phase of the viral replicative cycle.</text>
</comment>
<comment type="PTM">
    <text evidence="1">Glycosylated; contains phosphate and sulfate-substituted glycans. O-glycosylation is required for hemagglutination and hemadsorption activities of infected cell membranes.</text>
</comment>
<comment type="similarity">
    <text evidence="5">Belongs to the orthopoxvirus OPG185 family.</text>
</comment>
<proteinExistence type="evidence at transcript level"/>
<organism>
    <name type="scientific">Vaccinia virus (strain Tian Tan)</name>
    <name type="common">VACV</name>
    <dbReference type="NCBI Taxonomy" id="10253"/>
    <lineage>
        <taxon>Viruses</taxon>
        <taxon>Varidnaviria</taxon>
        <taxon>Bamfordvirae</taxon>
        <taxon>Nucleocytoviricota</taxon>
        <taxon>Pokkesviricetes</taxon>
        <taxon>Chitovirales</taxon>
        <taxon>Poxviridae</taxon>
        <taxon>Chordopoxvirinae</taxon>
        <taxon>Orthopoxvirus</taxon>
        <taxon>Vaccinia virus</taxon>
    </lineage>
</organism>
<keyword id="KW-1015">Disulfide bond</keyword>
<keyword id="KW-0244">Early protein</keyword>
<keyword id="KW-0325">Glycoprotein</keyword>
<keyword id="KW-0348">Hemagglutinin</keyword>
<keyword id="KW-1043">Host membrane</keyword>
<keyword id="KW-0393">Immunoglobulin domain</keyword>
<keyword id="KW-0426">Late protein</keyword>
<keyword id="KW-0472">Membrane</keyword>
<keyword id="KW-0732">Signal</keyword>
<keyword id="KW-0812">Transmembrane</keyword>
<keyword id="KW-1133">Transmembrane helix</keyword>
<keyword id="KW-0261">Viral envelope protein</keyword>
<keyword id="KW-0946">Virion</keyword>
<sequence length="315" mass="34758">MARLPILLLLISLVYSTPSPQTSKKIGDDATLSCNRNNTNDYVVMSAWYKEPNSIILLAAKSDVLYFDNYTKDKISYDSPYDDLVTTITIKSLTARDAGTYVCAFFMTSPTNDTDKVDYEEYSTELIVNTDSESTIDIILSGSTHSPETSSEKPEDIDNLNCSSVFEIATPEPITDNVEDHTDTVTYTSDSINTVSASSGESTTDETPEPITDKEEDHTVTDTVSYTTVSTSSGIVTTKSTTDDADLYDTYNDNDTVPSTTVGCSTTSISNYKTKDFVEIFGITALIILSAVAIFCITYYIYNKRSRKYKTENKV</sequence>
<feature type="signal peptide" evidence="2">
    <location>
        <begin position="1"/>
        <end position="16"/>
    </location>
</feature>
<feature type="chain" id="PRO_0000040567" description="Protein OPG185">
    <location>
        <begin position="17"/>
        <end position="315"/>
    </location>
</feature>
<feature type="topological domain" description="Virion surface" evidence="2">
    <location>
        <begin position="17"/>
        <end position="279"/>
    </location>
</feature>
<feature type="transmembrane region" description="Helical" evidence="2">
    <location>
        <begin position="280"/>
        <end position="303"/>
    </location>
</feature>
<feature type="topological domain" description="Intravirion" evidence="2">
    <location>
        <begin position="304"/>
        <end position="315"/>
    </location>
</feature>
<feature type="domain" description="Ig-like V-type">
    <location>
        <begin position="17"/>
        <end position="121"/>
    </location>
</feature>
<feature type="region of interest" description="Disordered" evidence="4">
    <location>
        <begin position="192"/>
        <end position="214"/>
    </location>
</feature>
<feature type="compositionally biased region" description="Polar residues" evidence="4">
    <location>
        <begin position="192"/>
        <end position="202"/>
    </location>
</feature>
<feature type="glycosylation site" description="N-linked (GlcNAc...) asparagine; by host" evidence="2">
    <location>
        <position position="37"/>
    </location>
</feature>
<feature type="glycosylation site" description="N-linked (GlcNAc...) asparagine; by host" evidence="2">
    <location>
        <position position="69"/>
    </location>
</feature>
<feature type="glycosylation site" description="N-linked (GlcNAc...) asparagine; by host" evidence="2">
    <location>
        <position position="112"/>
    </location>
</feature>
<feature type="glycosylation site" description="N-linked (GlcNAc...) asparagine; by host" evidence="2">
    <location>
        <position position="161"/>
    </location>
</feature>
<feature type="glycosylation site" description="N-linked (GlcNAc...) asparagine; by host" evidence="2">
    <location>
        <position position="254"/>
    </location>
</feature>
<feature type="disulfide bond" evidence="3">
    <location>
        <begin position="34"/>
        <end position="103"/>
    </location>
</feature>
<feature type="disulfide bond" description="Interchain (with C-20 in complement control protein C3)" evidence="3">
    <location>
        <position position="162"/>
    </location>
</feature>
<feature type="sequence conflict" description="In Ref. 2; AAA74188." evidence="5" ref="2">
    <original>S</original>
    <variation>T</variation>
    <location>
        <position position="132"/>
    </location>
</feature>
<feature type="sequence conflict" description="In Ref. 1 and 2." evidence="5" ref="1 2">
    <original>S</original>
    <variation>T</variation>
    <location>
        <position position="198"/>
    </location>
</feature>
<feature type="sequence conflict" description="In Ref. 2; AAA74188." evidence="5" ref="2">
    <original>A</original>
    <variation>G</variation>
    <location>
        <position position="245"/>
    </location>
</feature>
<gene>
    <name type="primary">OPG185</name>
    <name type="synonym">HA</name>
    <name type="ORF">TA66R</name>
</gene>
<dbReference type="EMBL" id="X15709">
    <property type="protein sequence ID" value="CAA33740.1"/>
    <property type="molecule type" value="Genomic_DNA"/>
</dbReference>
<dbReference type="EMBL" id="U25662">
    <property type="protein sequence ID" value="AAA74188.1"/>
    <property type="molecule type" value="Genomic_DNA"/>
</dbReference>
<dbReference type="EMBL" id="AF095689">
    <property type="protein sequence ID" value="AAF34065.1"/>
    <property type="molecule type" value="Genomic_DNA"/>
</dbReference>
<dbReference type="PIR" id="JL0108">
    <property type="entry name" value="HNVZVT"/>
</dbReference>
<dbReference type="SMR" id="P16561"/>
<dbReference type="GlyCosmos" id="P16561">
    <property type="glycosylation" value="5 sites, No reported glycans"/>
</dbReference>
<dbReference type="Proteomes" id="UP000163220">
    <property type="component" value="Genome"/>
</dbReference>
<dbReference type="GO" id="GO:0033644">
    <property type="term" value="C:host cell membrane"/>
    <property type="evidence" value="ECO:0007669"/>
    <property type="project" value="UniProtKB-SubCell"/>
</dbReference>
<dbReference type="GO" id="GO:0016020">
    <property type="term" value="C:membrane"/>
    <property type="evidence" value="ECO:0007669"/>
    <property type="project" value="UniProtKB-KW"/>
</dbReference>
<dbReference type="GO" id="GO:0019031">
    <property type="term" value="C:viral envelope"/>
    <property type="evidence" value="ECO:0007669"/>
    <property type="project" value="UniProtKB-KW"/>
</dbReference>
<dbReference type="GO" id="GO:0055036">
    <property type="term" value="C:virion membrane"/>
    <property type="evidence" value="ECO:0007669"/>
    <property type="project" value="UniProtKB-SubCell"/>
</dbReference>
<dbReference type="Gene3D" id="2.60.40.10">
    <property type="entry name" value="Immunoglobulins"/>
    <property type="match status" value="1"/>
</dbReference>
<dbReference type="InterPro" id="IPR007110">
    <property type="entry name" value="Ig-like_dom"/>
</dbReference>
<dbReference type="InterPro" id="IPR036179">
    <property type="entry name" value="Ig-like_dom_sf"/>
</dbReference>
<dbReference type="InterPro" id="IPR013783">
    <property type="entry name" value="Ig-like_fold"/>
</dbReference>
<dbReference type="InterPro" id="IPR003599">
    <property type="entry name" value="Ig_sub"/>
</dbReference>
<dbReference type="InterPro" id="IPR013106">
    <property type="entry name" value="Ig_V-set"/>
</dbReference>
<dbReference type="Pfam" id="PF07686">
    <property type="entry name" value="V-set"/>
    <property type="match status" value="1"/>
</dbReference>
<dbReference type="SMART" id="SM00409">
    <property type="entry name" value="IG"/>
    <property type="match status" value="1"/>
</dbReference>
<dbReference type="SUPFAM" id="SSF48726">
    <property type="entry name" value="Immunoglobulin"/>
    <property type="match status" value="1"/>
</dbReference>
<dbReference type="PROSITE" id="PS50835">
    <property type="entry name" value="IG_LIKE"/>
    <property type="match status" value="1"/>
</dbReference>
<evidence type="ECO:0000250" key="1">
    <source>
        <dbReference type="UniProtKB" id="Q01218"/>
    </source>
</evidence>
<evidence type="ECO:0000255" key="2"/>
<evidence type="ECO:0000255" key="3">
    <source>
        <dbReference type="PROSITE-ProRule" id="PRU00114"/>
    </source>
</evidence>
<evidence type="ECO:0000256" key="4">
    <source>
        <dbReference type="SAM" id="MobiDB-lite"/>
    </source>
</evidence>
<evidence type="ECO:0000305" key="5"/>
<organismHost>
    <name type="scientific">Homo sapiens</name>
    <name type="common">Human</name>
    <dbReference type="NCBI Taxonomy" id="9606"/>
</organismHost>
<name>HEMA_VACCT</name>
<reference key="1">
    <citation type="journal article" date="1989" name="J. Exp. Med.">
        <title>Vaccinia virus hemagglutinin. A novel member of the immunoglobulin superfamily.</title>
        <authorList>
            <person name="Dongyan J."/>
            <person name="Zhiliang L."/>
            <person name="Qi J."/>
            <person name="Hao Y."/>
            <person name="Yunde H."/>
        </authorList>
    </citation>
    <scope>NUCLEOTIDE SEQUENCE [GENOMIC DNA]</scope>
</reference>
<reference key="2">
    <citation type="journal article" date="1989" name="Ping Tu Hsueh Pao">
        <title>Complete nucleotide sequence of the hemagglutinin gene of Tian Tan strain of vaccinia virus.</title>
        <authorList>
            <person name="Li Z."/>
            <person name="Jin Q."/>
            <person name="Yu W."/>
            <person name="Jin T."/>
            <person name="Hou Y."/>
        </authorList>
    </citation>
    <scope>NUCLEOTIDE SEQUENCE [GENOMIC DNA]</scope>
</reference>
<reference key="3">
    <citation type="submission" date="1998-09" db="EMBL/GenBank/DDBJ databases">
        <title>Complete genomic sequence of vaccinia virus (Tian Tan strain).</title>
        <authorList>
            <person name="Jin Q."/>
            <person name="Hou Y.D."/>
            <person name="Cheng N.H."/>
            <person name="Yao E.M."/>
            <person name="Cheng S.X."/>
            <person name="Yang X.K."/>
            <person name="Jing D.Y."/>
            <person name="Yu W.H."/>
            <person name="Yuan J.S."/>
            <person name="Ma X.J."/>
        </authorList>
    </citation>
    <scope>NUCLEOTIDE SEQUENCE [LARGE SCALE GENOMIC DNA]</scope>
</reference>
<accession>P16561</accession>
<accession>Q89120</accession>
<accession>Q9JF47</accession>
<protein>
    <recommendedName>
        <fullName>Protein OPG185</fullName>
    </recommendedName>
    <alternativeName>
        <fullName>Hemagglutinin</fullName>
    </alternativeName>
</protein>